<evidence type="ECO:0000256" key="1">
    <source>
        <dbReference type="SAM" id="MobiDB-lite"/>
    </source>
</evidence>
<evidence type="ECO:0000305" key="2"/>
<sequence length="496" mass="54794">MSSLNVKIQDVFDEPACERNRSKDSNARSKGCSKPLTPGAAAGGCAFDGAKIVLQPITDVAHLVHAPLACEGNSWDNRGTASSGPTLWRTSFTTDLTEQDIVMGNSERKLFKAIRQIREAYQPPAIFVYATCVTALIGDDIEAICKRAEETCGLPVVPINSPGFVGSKNLGNKLAGEALLDHVIGTVEPDDAGPCDINILGEFNLSGEFWLVKPLLERLGIRVRACIPGDARYLDIASAHRARAAMLVCSTALINLARKMEERWDIPFFEGSFYGITATSEALRQIADLLVKKGTDLEILDRTDALIAEEEAIAWKKLEEYRPRLKGKRVLINTGGVKSWSLVHALMEIGMEIVGTSVKKSTVEDKERIRQVLKDDLQMFESMSPRELYAMLSEHKADIMLSGGRTQFIALKAKMPWVDINQERHRPYAGYDGTVELVRQIDLAIHNPVWSQVREPAPWESRPATQEPLPNTRPDTDATSVGRSIRRHDAGDFVEC</sequence>
<feature type="chain" id="PRO_0000153122" description="Nitrogenase iron-molybdenum cofactor biosynthesis protein NifE">
    <location>
        <begin position="1"/>
        <end position="496"/>
    </location>
</feature>
<feature type="region of interest" description="Disordered" evidence="1">
    <location>
        <begin position="455"/>
        <end position="491"/>
    </location>
</feature>
<name>NIFE_SINFN</name>
<comment type="function">
    <text>This protein may play a role in the biosynthesis of the prosthetic group of nitrogenase (FeMo cofactor).</text>
</comment>
<comment type="pathway">
    <text>Cofactor biosynthesis; Fe-Mo cofactor biosynthesis.</text>
</comment>
<comment type="similarity">
    <text evidence="2">Belongs to the NifD/NifK/NifE/NifN family.</text>
</comment>
<accession>P55673</accession>
<proteinExistence type="inferred from homology"/>
<geneLocation type="plasmid">
    <name>sym pNGR234a</name>
</geneLocation>
<keyword id="KW-0535">Nitrogen fixation</keyword>
<keyword id="KW-0614">Plasmid</keyword>
<keyword id="KW-1185">Reference proteome</keyword>
<protein>
    <recommendedName>
        <fullName>Nitrogenase iron-molybdenum cofactor biosynthesis protein NifE</fullName>
    </recommendedName>
</protein>
<gene>
    <name type="primary">nifE</name>
    <name type="ordered locus">NGR_a01100</name>
    <name type="ORF">y4vN</name>
</gene>
<dbReference type="EMBL" id="U00090">
    <property type="protein sequence ID" value="AAB91902.1"/>
    <property type="molecule type" value="Genomic_DNA"/>
</dbReference>
<dbReference type="RefSeq" id="NP_444115.1">
    <property type="nucleotide sequence ID" value="NC_000914.2"/>
</dbReference>
<dbReference type="RefSeq" id="WP_010875151.1">
    <property type="nucleotide sequence ID" value="NC_000914.2"/>
</dbReference>
<dbReference type="SMR" id="P55673"/>
<dbReference type="KEGG" id="rhi:NGR_a01100"/>
<dbReference type="PATRIC" id="fig|394.7.peg.94"/>
<dbReference type="eggNOG" id="COG2710">
    <property type="taxonomic scope" value="Bacteria"/>
</dbReference>
<dbReference type="HOGENOM" id="CLU_025876_1_1_5"/>
<dbReference type="OrthoDB" id="5717231at2"/>
<dbReference type="UniPathway" id="UPA00782"/>
<dbReference type="Proteomes" id="UP000001054">
    <property type="component" value="Plasmid pNGR234a"/>
</dbReference>
<dbReference type="GO" id="GO:0016163">
    <property type="term" value="F:nitrogenase activity"/>
    <property type="evidence" value="ECO:0007669"/>
    <property type="project" value="InterPro"/>
</dbReference>
<dbReference type="GO" id="GO:0009399">
    <property type="term" value="P:nitrogen fixation"/>
    <property type="evidence" value="ECO:0007669"/>
    <property type="project" value="UniProtKB-KW"/>
</dbReference>
<dbReference type="GO" id="GO:0065003">
    <property type="term" value="P:protein-containing complex assembly"/>
    <property type="evidence" value="ECO:0007669"/>
    <property type="project" value="InterPro"/>
</dbReference>
<dbReference type="CDD" id="cd01968">
    <property type="entry name" value="Nitrogenase_NifE_I"/>
    <property type="match status" value="1"/>
</dbReference>
<dbReference type="Gene3D" id="3.40.50.12380">
    <property type="entry name" value="Nitrogenase MoFe cofactor biosynthesis protein NifE, C-terminal"/>
    <property type="match status" value="1"/>
</dbReference>
<dbReference type="Gene3D" id="3.40.50.1980">
    <property type="entry name" value="Nitrogenase molybdenum iron protein domain"/>
    <property type="match status" value="1"/>
</dbReference>
<dbReference type="InterPro" id="IPR000510">
    <property type="entry name" value="Nase/OxRdtase_comp1"/>
</dbReference>
<dbReference type="InterPro" id="IPR000318">
    <property type="entry name" value="Nase_comp1_CS"/>
</dbReference>
<dbReference type="InterPro" id="IPR005973">
    <property type="entry name" value="NifE"/>
</dbReference>
<dbReference type="InterPro" id="IPR049939">
    <property type="entry name" value="NifE-like"/>
</dbReference>
<dbReference type="NCBIfam" id="TIGR01283">
    <property type="entry name" value="nifE"/>
    <property type="match status" value="1"/>
</dbReference>
<dbReference type="PANTHER" id="PTHR42956">
    <property type="entry name" value="NITROGENASE IRON-MOLYBDENUM COFACTOR BIOSYNTHESIS PROTEIN NIFE"/>
    <property type="match status" value="1"/>
</dbReference>
<dbReference type="PANTHER" id="PTHR42956:SF1">
    <property type="entry name" value="NITROGENASE IRON-MOLYBDENUM COFACTOR BIOSYNTHESIS PROTEIN NIFE"/>
    <property type="match status" value="1"/>
</dbReference>
<dbReference type="Pfam" id="PF00148">
    <property type="entry name" value="Oxidored_nitro"/>
    <property type="match status" value="1"/>
</dbReference>
<dbReference type="SUPFAM" id="SSF53807">
    <property type="entry name" value="Helical backbone' metal receptor"/>
    <property type="match status" value="1"/>
</dbReference>
<dbReference type="PROSITE" id="PS00699">
    <property type="entry name" value="NITROGENASE_1_1"/>
    <property type="match status" value="1"/>
</dbReference>
<dbReference type="PROSITE" id="PS00090">
    <property type="entry name" value="NITROGENASE_1_2"/>
    <property type="match status" value="1"/>
</dbReference>
<reference key="1">
    <citation type="journal article" date="1997" name="Nature">
        <title>Molecular basis of symbiosis between Rhizobium and legumes.</title>
        <authorList>
            <person name="Freiberg C.A."/>
            <person name="Fellay R."/>
            <person name="Bairoch A."/>
            <person name="Broughton W.J."/>
            <person name="Rosenthal A."/>
            <person name="Perret X."/>
        </authorList>
    </citation>
    <scope>NUCLEOTIDE SEQUENCE [LARGE SCALE GENOMIC DNA]</scope>
    <source>
        <strain>NBRC 101917 / NGR234</strain>
    </source>
</reference>
<reference key="2">
    <citation type="journal article" date="2009" name="Appl. Environ. Microbiol.">
        <title>Rhizobium sp. strain NGR234 possesses a remarkable number of secretion systems.</title>
        <authorList>
            <person name="Schmeisser C."/>
            <person name="Liesegang H."/>
            <person name="Krysciak D."/>
            <person name="Bakkou N."/>
            <person name="Le Quere A."/>
            <person name="Wollherr A."/>
            <person name="Heinemeyer I."/>
            <person name="Morgenstern B."/>
            <person name="Pommerening-Roeser A."/>
            <person name="Flores M."/>
            <person name="Palacios R."/>
            <person name="Brenner S."/>
            <person name="Gottschalk G."/>
            <person name="Schmitz R.A."/>
            <person name="Broughton W.J."/>
            <person name="Perret X."/>
            <person name="Strittmatter A.W."/>
            <person name="Streit W.R."/>
        </authorList>
    </citation>
    <scope>NUCLEOTIDE SEQUENCE [LARGE SCALE GENOMIC DNA]</scope>
    <source>
        <strain>NBRC 101917 / NGR234</strain>
    </source>
</reference>
<organism>
    <name type="scientific">Sinorhizobium fredii (strain NBRC 101917 / NGR234)</name>
    <dbReference type="NCBI Taxonomy" id="394"/>
    <lineage>
        <taxon>Bacteria</taxon>
        <taxon>Pseudomonadati</taxon>
        <taxon>Pseudomonadota</taxon>
        <taxon>Alphaproteobacteria</taxon>
        <taxon>Hyphomicrobiales</taxon>
        <taxon>Rhizobiaceae</taxon>
        <taxon>Sinorhizobium/Ensifer group</taxon>
        <taxon>Sinorhizobium</taxon>
    </lineage>
</organism>